<protein>
    <recommendedName>
        <fullName evidence="1">Transcriptional regulator SlyA</fullName>
    </recommendedName>
</protein>
<proteinExistence type="inferred from homology"/>
<name>SLYA_ECOSM</name>
<evidence type="ECO:0000255" key="1">
    <source>
        <dbReference type="HAMAP-Rule" id="MF_01819"/>
    </source>
</evidence>
<sequence>MESPLGSDLARLVRIWRALIDHRLKPLELTQTHWVTLHNIHQLPPDQSQIQLAKAIGIEQPSLVRTLDQLEEKGLISRQTCASDRRAKRIKLTEKAEPLISEMEAVINKTRAEILHGISAEELEQLIKLIAKLEHNIIELQAKG</sequence>
<dbReference type="EMBL" id="CP000970">
    <property type="protein sequence ID" value="ACB19108.1"/>
    <property type="molecule type" value="Genomic_DNA"/>
</dbReference>
<dbReference type="RefSeq" id="WP_000445640.1">
    <property type="nucleotide sequence ID" value="NC_010498.1"/>
</dbReference>
<dbReference type="SMR" id="B1LEP4"/>
<dbReference type="KEGG" id="ecm:EcSMS35_1557"/>
<dbReference type="HOGENOM" id="CLU_083287_18_2_6"/>
<dbReference type="Proteomes" id="UP000007011">
    <property type="component" value="Chromosome"/>
</dbReference>
<dbReference type="GO" id="GO:0003677">
    <property type="term" value="F:DNA binding"/>
    <property type="evidence" value="ECO:0007669"/>
    <property type="project" value="UniProtKB-UniRule"/>
</dbReference>
<dbReference type="GO" id="GO:0003700">
    <property type="term" value="F:DNA-binding transcription factor activity"/>
    <property type="evidence" value="ECO:0007669"/>
    <property type="project" value="UniProtKB-UniRule"/>
</dbReference>
<dbReference type="GO" id="GO:0006950">
    <property type="term" value="P:response to stress"/>
    <property type="evidence" value="ECO:0007669"/>
    <property type="project" value="TreeGrafter"/>
</dbReference>
<dbReference type="FunFam" id="1.10.10.10:FF:000261">
    <property type="entry name" value="Transcriptional regulator SlyA"/>
    <property type="match status" value="1"/>
</dbReference>
<dbReference type="Gene3D" id="1.10.10.10">
    <property type="entry name" value="Winged helix-like DNA-binding domain superfamily/Winged helix DNA-binding domain"/>
    <property type="match status" value="1"/>
</dbReference>
<dbReference type="HAMAP" id="MF_01819">
    <property type="entry name" value="HTH_type_SlyA"/>
    <property type="match status" value="1"/>
</dbReference>
<dbReference type="InterPro" id="IPR000835">
    <property type="entry name" value="HTH_MarR-typ"/>
</dbReference>
<dbReference type="InterPro" id="IPR039422">
    <property type="entry name" value="MarR/SlyA-like"/>
</dbReference>
<dbReference type="InterPro" id="IPR023187">
    <property type="entry name" value="Tscrpt_reg_MarR-type_CS"/>
</dbReference>
<dbReference type="InterPro" id="IPR023071">
    <property type="entry name" value="Tscrpt_reg_SlyA"/>
</dbReference>
<dbReference type="InterPro" id="IPR036388">
    <property type="entry name" value="WH-like_DNA-bd_sf"/>
</dbReference>
<dbReference type="InterPro" id="IPR036390">
    <property type="entry name" value="WH_DNA-bd_sf"/>
</dbReference>
<dbReference type="NCBIfam" id="NF002926">
    <property type="entry name" value="PRK03573.1"/>
    <property type="match status" value="1"/>
</dbReference>
<dbReference type="PANTHER" id="PTHR33164:SF64">
    <property type="entry name" value="TRANSCRIPTIONAL REGULATOR SLYA"/>
    <property type="match status" value="1"/>
</dbReference>
<dbReference type="PANTHER" id="PTHR33164">
    <property type="entry name" value="TRANSCRIPTIONAL REGULATOR, MARR FAMILY"/>
    <property type="match status" value="1"/>
</dbReference>
<dbReference type="Pfam" id="PF01047">
    <property type="entry name" value="MarR"/>
    <property type="match status" value="1"/>
</dbReference>
<dbReference type="PRINTS" id="PR00598">
    <property type="entry name" value="HTHMARR"/>
</dbReference>
<dbReference type="SMART" id="SM00347">
    <property type="entry name" value="HTH_MARR"/>
    <property type="match status" value="1"/>
</dbReference>
<dbReference type="SUPFAM" id="SSF46785">
    <property type="entry name" value="Winged helix' DNA-binding domain"/>
    <property type="match status" value="1"/>
</dbReference>
<dbReference type="PROSITE" id="PS01117">
    <property type="entry name" value="HTH_MARR_1"/>
    <property type="match status" value="1"/>
</dbReference>
<dbReference type="PROSITE" id="PS50995">
    <property type="entry name" value="HTH_MARR_2"/>
    <property type="match status" value="1"/>
</dbReference>
<organism>
    <name type="scientific">Escherichia coli (strain SMS-3-5 / SECEC)</name>
    <dbReference type="NCBI Taxonomy" id="439855"/>
    <lineage>
        <taxon>Bacteria</taxon>
        <taxon>Pseudomonadati</taxon>
        <taxon>Pseudomonadota</taxon>
        <taxon>Gammaproteobacteria</taxon>
        <taxon>Enterobacterales</taxon>
        <taxon>Enterobacteriaceae</taxon>
        <taxon>Escherichia</taxon>
    </lineage>
</organism>
<gene>
    <name evidence="1" type="primary">slyA</name>
    <name type="ordered locus">EcSMS35_1557</name>
</gene>
<comment type="function">
    <text evidence="1">Transcription regulator that can specifically activate or repress expression of target genes.</text>
</comment>
<comment type="subunit">
    <text evidence="1">Homodimer.</text>
</comment>
<comment type="similarity">
    <text evidence="1">Belongs to the SlyA family.</text>
</comment>
<keyword id="KW-0010">Activator</keyword>
<keyword id="KW-0238">DNA-binding</keyword>
<keyword id="KW-0678">Repressor</keyword>
<keyword id="KW-0804">Transcription</keyword>
<keyword id="KW-0805">Transcription regulation</keyword>
<reference key="1">
    <citation type="journal article" date="2008" name="J. Bacteriol.">
        <title>Insights into the environmental resistance gene pool from the genome sequence of the multidrug-resistant environmental isolate Escherichia coli SMS-3-5.</title>
        <authorList>
            <person name="Fricke W.F."/>
            <person name="Wright M.S."/>
            <person name="Lindell A.H."/>
            <person name="Harkins D.M."/>
            <person name="Baker-Austin C."/>
            <person name="Ravel J."/>
            <person name="Stepanauskas R."/>
        </authorList>
    </citation>
    <scope>NUCLEOTIDE SEQUENCE [LARGE SCALE GENOMIC DNA]</scope>
    <source>
        <strain>SMS-3-5 / SECEC</strain>
    </source>
</reference>
<feature type="chain" id="PRO_1000188014" description="Transcriptional regulator SlyA">
    <location>
        <begin position="1"/>
        <end position="144"/>
    </location>
</feature>
<feature type="domain" description="HTH marR-type" evidence="1">
    <location>
        <begin position="2"/>
        <end position="135"/>
    </location>
</feature>
<feature type="DNA-binding region" description="H-T-H motif" evidence="1">
    <location>
        <begin position="49"/>
        <end position="72"/>
    </location>
</feature>
<accession>B1LEP4</accession>